<protein>
    <recommendedName>
        <fullName evidence="1">4-deoxy-L-threo-5-hexosulose-uronate ketol-isomerase</fullName>
        <ecNumber evidence="1">5.3.1.17</ecNumber>
    </recommendedName>
    <alternativeName>
        <fullName evidence="1">5-keto-4-deoxyuronate isomerase</fullName>
    </alternativeName>
    <alternativeName>
        <fullName evidence="1">DKI isomerase</fullName>
    </alternativeName>
</protein>
<proteinExistence type="inferred from homology"/>
<keyword id="KW-0413">Isomerase</keyword>
<keyword id="KW-0479">Metal-binding</keyword>
<keyword id="KW-0862">Zinc</keyword>
<reference key="1">
    <citation type="submission" date="2007-02" db="EMBL/GenBank/DDBJ databases">
        <title>Complete sequence of chromosome 1 of Rhodobacter sphaeroides ATCC 17029.</title>
        <authorList>
            <person name="Copeland A."/>
            <person name="Lucas S."/>
            <person name="Lapidus A."/>
            <person name="Barry K."/>
            <person name="Detter J.C."/>
            <person name="Glavina del Rio T."/>
            <person name="Hammon N."/>
            <person name="Israni S."/>
            <person name="Dalin E."/>
            <person name="Tice H."/>
            <person name="Pitluck S."/>
            <person name="Kiss H."/>
            <person name="Brettin T."/>
            <person name="Bruce D."/>
            <person name="Han C."/>
            <person name="Tapia R."/>
            <person name="Gilna P."/>
            <person name="Schmutz J."/>
            <person name="Larimer F."/>
            <person name="Land M."/>
            <person name="Hauser L."/>
            <person name="Kyrpides N."/>
            <person name="Mikhailova N."/>
            <person name="Richardson P."/>
            <person name="Mackenzie C."/>
            <person name="Choudhary M."/>
            <person name="Donohue T.J."/>
            <person name="Kaplan S."/>
        </authorList>
    </citation>
    <scope>NUCLEOTIDE SEQUENCE [LARGE SCALE GENOMIC DNA]</scope>
    <source>
        <strain>ATCC 17029 / ATH 2.4.9</strain>
    </source>
</reference>
<evidence type="ECO:0000255" key="1">
    <source>
        <dbReference type="HAMAP-Rule" id="MF_00687"/>
    </source>
</evidence>
<name>KDUI_CERS1</name>
<comment type="function">
    <text evidence="1">Catalyzes the isomerization of 5-dehydro-4-deoxy-D-glucuronate to 3-deoxy-D-glycero-2,5-hexodiulosonate.</text>
</comment>
<comment type="catalytic activity">
    <reaction evidence="1">
        <text>5-dehydro-4-deoxy-D-glucuronate = 3-deoxy-D-glycero-2,5-hexodiulosonate</text>
        <dbReference type="Rhea" id="RHEA:23896"/>
        <dbReference type="ChEBI" id="CHEBI:17117"/>
        <dbReference type="ChEBI" id="CHEBI:29071"/>
        <dbReference type="EC" id="5.3.1.17"/>
    </reaction>
</comment>
<comment type="cofactor">
    <cofactor evidence="1">
        <name>Zn(2+)</name>
        <dbReference type="ChEBI" id="CHEBI:29105"/>
    </cofactor>
    <text evidence="1">Binds 1 zinc ion per subunit.</text>
</comment>
<comment type="pathway">
    <text evidence="1">Glycan metabolism; pectin degradation; 2-dehydro-3-deoxy-D-gluconate from pectin: step 4/5.</text>
</comment>
<comment type="similarity">
    <text evidence="1">Belongs to the KduI family.</text>
</comment>
<feature type="chain" id="PRO_1000045085" description="4-deoxy-L-threo-5-hexosulose-uronate ketol-isomerase">
    <location>
        <begin position="1"/>
        <end position="274"/>
    </location>
</feature>
<feature type="binding site" evidence="1">
    <location>
        <position position="192"/>
    </location>
    <ligand>
        <name>Zn(2+)</name>
        <dbReference type="ChEBI" id="CHEBI:29105"/>
    </ligand>
</feature>
<feature type="binding site" evidence="1">
    <location>
        <position position="194"/>
    </location>
    <ligand>
        <name>Zn(2+)</name>
        <dbReference type="ChEBI" id="CHEBI:29105"/>
    </ligand>
</feature>
<feature type="binding site" evidence="1">
    <location>
        <position position="199"/>
    </location>
    <ligand>
        <name>Zn(2+)</name>
        <dbReference type="ChEBI" id="CHEBI:29105"/>
    </ligand>
</feature>
<feature type="binding site" evidence="1">
    <location>
        <position position="241"/>
    </location>
    <ligand>
        <name>Zn(2+)</name>
        <dbReference type="ChEBI" id="CHEBI:29105"/>
    </ligand>
</feature>
<gene>
    <name evidence="1" type="primary">kduI</name>
    <name type="ordered locus">Rsph17029_2134</name>
</gene>
<accession>A3PLM1</accession>
<sequence length="274" mass="30263">MTHVEIRHAMDPVSARQLDTAGLREAFHMGDLFRSGEIRLVYTHYDRMIVGGAVPAGEPLVLDEVKPTGTASILDRREMGVVNVGAAGTVSAGGESWEMGRGDVLYLPMGAGPVTFAGEGRFYILSAPAHTAHPARLVKLEDAKKVKLGSPETANERTINQFIHPEVMQSCQLVVGYTQFHGGSVWNTMPAHVHDRRMEAYLYFDLAEEARVFHFMGEPSETRHLVMRNEEAVVSPPWSIHCGCGTGSYTFVWAMAGDNVDYRDVEMVAMEDLR</sequence>
<dbReference type="EC" id="5.3.1.17" evidence="1"/>
<dbReference type="EMBL" id="CP000577">
    <property type="protein sequence ID" value="ABN77237.1"/>
    <property type="molecule type" value="Genomic_DNA"/>
</dbReference>
<dbReference type="RefSeq" id="WP_002720646.1">
    <property type="nucleotide sequence ID" value="NC_009049.1"/>
</dbReference>
<dbReference type="SMR" id="A3PLM1"/>
<dbReference type="GeneID" id="67447214"/>
<dbReference type="KEGG" id="rsh:Rsph17029_2134"/>
<dbReference type="HOGENOM" id="CLU_062609_0_0_5"/>
<dbReference type="UniPathway" id="UPA00545">
    <property type="reaction ID" value="UER00826"/>
</dbReference>
<dbReference type="GO" id="GO:0008697">
    <property type="term" value="F:4-deoxy-L-threo-5-hexosulose-uronate ketol-isomerase activity"/>
    <property type="evidence" value="ECO:0007669"/>
    <property type="project" value="UniProtKB-UniRule"/>
</dbReference>
<dbReference type="GO" id="GO:0008270">
    <property type="term" value="F:zinc ion binding"/>
    <property type="evidence" value="ECO:0007669"/>
    <property type="project" value="UniProtKB-UniRule"/>
</dbReference>
<dbReference type="GO" id="GO:0019698">
    <property type="term" value="P:D-galacturonate catabolic process"/>
    <property type="evidence" value="ECO:0007669"/>
    <property type="project" value="TreeGrafter"/>
</dbReference>
<dbReference type="GO" id="GO:0042840">
    <property type="term" value="P:D-glucuronate catabolic process"/>
    <property type="evidence" value="ECO:0007669"/>
    <property type="project" value="TreeGrafter"/>
</dbReference>
<dbReference type="GO" id="GO:0045490">
    <property type="term" value="P:pectin catabolic process"/>
    <property type="evidence" value="ECO:0007669"/>
    <property type="project" value="UniProtKB-UniRule"/>
</dbReference>
<dbReference type="CDD" id="cd20491">
    <property type="entry name" value="cupin_KduI_C"/>
    <property type="match status" value="1"/>
</dbReference>
<dbReference type="CDD" id="cd20294">
    <property type="entry name" value="cupin_KduI_N"/>
    <property type="match status" value="1"/>
</dbReference>
<dbReference type="Gene3D" id="2.60.120.10">
    <property type="entry name" value="Jelly Rolls"/>
    <property type="match status" value="1"/>
</dbReference>
<dbReference type="Gene3D" id="2.60.120.520">
    <property type="entry name" value="pectin degrading enzyme 5-keto 4- deoxyuronate isomerase, domain 1"/>
    <property type="match status" value="1"/>
</dbReference>
<dbReference type="HAMAP" id="MF_00687">
    <property type="entry name" value="KduI"/>
    <property type="match status" value="1"/>
</dbReference>
<dbReference type="InterPro" id="IPR007045">
    <property type="entry name" value="KduI"/>
</dbReference>
<dbReference type="InterPro" id="IPR021120">
    <property type="entry name" value="KduI/IolB_isomerase"/>
</dbReference>
<dbReference type="InterPro" id="IPR027449">
    <property type="entry name" value="KduI_N"/>
</dbReference>
<dbReference type="InterPro" id="IPR014710">
    <property type="entry name" value="RmlC-like_jellyroll"/>
</dbReference>
<dbReference type="InterPro" id="IPR011051">
    <property type="entry name" value="RmlC_Cupin_sf"/>
</dbReference>
<dbReference type="NCBIfam" id="NF002091">
    <property type="entry name" value="PRK00924.1"/>
    <property type="match status" value="1"/>
</dbReference>
<dbReference type="PANTHER" id="PTHR38461">
    <property type="entry name" value="4-DEOXY-L-THREO-5-HEXOSULOSE-URONATE KETOL-ISOMERASE"/>
    <property type="match status" value="1"/>
</dbReference>
<dbReference type="PANTHER" id="PTHR38461:SF1">
    <property type="entry name" value="4-DEOXY-L-THREO-5-HEXOSULOSE-URONATE KETOL-ISOMERASE"/>
    <property type="match status" value="1"/>
</dbReference>
<dbReference type="Pfam" id="PF04962">
    <property type="entry name" value="KduI"/>
    <property type="match status" value="1"/>
</dbReference>
<dbReference type="PIRSF" id="PIRSF006625">
    <property type="entry name" value="KduI"/>
    <property type="match status" value="1"/>
</dbReference>
<dbReference type="SUPFAM" id="SSF51182">
    <property type="entry name" value="RmlC-like cupins"/>
    <property type="match status" value="1"/>
</dbReference>
<organism>
    <name type="scientific">Cereibacter sphaeroides (strain ATCC 17029 / ATH 2.4.9)</name>
    <name type="common">Rhodobacter sphaeroides</name>
    <dbReference type="NCBI Taxonomy" id="349101"/>
    <lineage>
        <taxon>Bacteria</taxon>
        <taxon>Pseudomonadati</taxon>
        <taxon>Pseudomonadota</taxon>
        <taxon>Alphaproteobacteria</taxon>
        <taxon>Rhodobacterales</taxon>
        <taxon>Paracoccaceae</taxon>
        <taxon>Cereibacter</taxon>
    </lineage>
</organism>